<reference key="1">
    <citation type="journal article" date="2002" name="Proc. Natl. Acad. Sci. U.S.A.">
        <title>Extensive mosaic structure revealed by the complete genome sequence of uropathogenic Escherichia coli.</title>
        <authorList>
            <person name="Welch R.A."/>
            <person name="Burland V."/>
            <person name="Plunkett G. III"/>
            <person name="Redford P."/>
            <person name="Roesch P."/>
            <person name="Rasko D."/>
            <person name="Buckles E.L."/>
            <person name="Liou S.-R."/>
            <person name="Boutin A."/>
            <person name="Hackett J."/>
            <person name="Stroud D."/>
            <person name="Mayhew G.F."/>
            <person name="Rose D.J."/>
            <person name="Zhou S."/>
            <person name="Schwartz D.C."/>
            <person name="Perna N.T."/>
            <person name="Mobley H.L.T."/>
            <person name="Donnenberg M.S."/>
            <person name="Blattner F.R."/>
        </authorList>
    </citation>
    <scope>NUCLEOTIDE SEQUENCE [LARGE SCALE GENOMIC DNA]</scope>
    <source>
        <strain>CFT073 / ATCC 700928 / UPEC</strain>
    </source>
</reference>
<evidence type="ECO:0000255" key="1">
    <source>
        <dbReference type="HAMAP-Rule" id="MF_00046"/>
    </source>
</evidence>
<protein>
    <recommendedName>
        <fullName evidence="1">UDP-N-acetylmuramate--L-alanine ligase</fullName>
        <ecNumber evidence="1">6.3.2.8</ecNumber>
    </recommendedName>
    <alternativeName>
        <fullName evidence="1">UDP-N-acetylmuramoyl-L-alanine synthetase</fullName>
    </alternativeName>
</protein>
<feature type="chain" id="PRO_0000182090" description="UDP-N-acetylmuramate--L-alanine ligase">
    <location>
        <begin position="1"/>
        <end position="491"/>
    </location>
</feature>
<feature type="binding site" evidence="1">
    <location>
        <begin position="126"/>
        <end position="132"/>
    </location>
    <ligand>
        <name>ATP</name>
        <dbReference type="ChEBI" id="CHEBI:30616"/>
    </ligand>
</feature>
<accession>P65470</accession>
<accession>Q8X9Y7</accession>
<keyword id="KW-0067">ATP-binding</keyword>
<keyword id="KW-0131">Cell cycle</keyword>
<keyword id="KW-0132">Cell division</keyword>
<keyword id="KW-0133">Cell shape</keyword>
<keyword id="KW-0961">Cell wall biogenesis/degradation</keyword>
<keyword id="KW-0963">Cytoplasm</keyword>
<keyword id="KW-0436">Ligase</keyword>
<keyword id="KW-0547">Nucleotide-binding</keyword>
<keyword id="KW-0573">Peptidoglycan synthesis</keyword>
<keyword id="KW-1185">Reference proteome</keyword>
<name>MURC_ECOL6</name>
<organism>
    <name type="scientific">Escherichia coli O6:H1 (strain CFT073 / ATCC 700928 / UPEC)</name>
    <dbReference type="NCBI Taxonomy" id="199310"/>
    <lineage>
        <taxon>Bacteria</taxon>
        <taxon>Pseudomonadati</taxon>
        <taxon>Pseudomonadota</taxon>
        <taxon>Gammaproteobacteria</taxon>
        <taxon>Enterobacterales</taxon>
        <taxon>Enterobacteriaceae</taxon>
        <taxon>Escherichia</taxon>
    </lineage>
</organism>
<gene>
    <name evidence="1" type="primary">murC</name>
    <name type="ordered locus">c0109</name>
</gene>
<dbReference type="EC" id="6.3.2.8" evidence="1"/>
<dbReference type="EMBL" id="AE014075">
    <property type="protein sequence ID" value="AAN78607.1"/>
    <property type="molecule type" value="Genomic_DNA"/>
</dbReference>
<dbReference type="RefSeq" id="WP_001096048.1">
    <property type="nucleotide sequence ID" value="NZ_CP051263.1"/>
</dbReference>
<dbReference type="SMR" id="P65470"/>
<dbReference type="STRING" id="199310.c0109"/>
<dbReference type="GeneID" id="75169991"/>
<dbReference type="KEGG" id="ecc:c0109"/>
<dbReference type="eggNOG" id="COG0773">
    <property type="taxonomic scope" value="Bacteria"/>
</dbReference>
<dbReference type="HOGENOM" id="CLU_028104_2_2_6"/>
<dbReference type="BioCyc" id="ECOL199310:C0109-MONOMER"/>
<dbReference type="UniPathway" id="UPA00219"/>
<dbReference type="Proteomes" id="UP000001410">
    <property type="component" value="Chromosome"/>
</dbReference>
<dbReference type="GO" id="GO:0005737">
    <property type="term" value="C:cytoplasm"/>
    <property type="evidence" value="ECO:0007669"/>
    <property type="project" value="UniProtKB-SubCell"/>
</dbReference>
<dbReference type="GO" id="GO:0005524">
    <property type="term" value="F:ATP binding"/>
    <property type="evidence" value="ECO:0007669"/>
    <property type="project" value="UniProtKB-UniRule"/>
</dbReference>
<dbReference type="GO" id="GO:0008763">
    <property type="term" value="F:UDP-N-acetylmuramate-L-alanine ligase activity"/>
    <property type="evidence" value="ECO:0007669"/>
    <property type="project" value="UniProtKB-UniRule"/>
</dbReference>
<dbReference type="GO" id="GO:0051301">
    <property type="term" value="P:cell division"/>
    <property type="evidence" value="ECO:0007669"/>
    <property type="project" value="UniProtKB-KW"/>
</dbReference>
<dbReference type="GO" id="GO:0071555">
    <property type="term" value="P:cell wall organization"/>
    <property type="evidence" value="ECO:0007669"/>
    <property type="project" value="UniProtKB-KW"/>
</dbReference>
<dbReference type="GO" id="GO:0009252">
    <property type="term" value="P:peptidoglycan biosynthetic process"/>
    <property type="evidence" value="ECO:0007669"/>
    <property type="project" value="UniProtKB-UniRule"/>
</dbReference>
<dbReference type="GO" id="GO:0008360">
    <property type="term" value="P:regulation of cell shape"/>
    <property type="evidence" value="ECO:0007669"/>
    <property type="project" value="UniProtKB-KW"/>
</dbReference>
<dbReference type="FunFam" id="3.40.1190.10:FF:000001">
    <property type="entry name" value="UDP-N-acetylmuramate--L-alanine ligase"/>
    <property type="match status" value="1"/>
</dbReference>
<dbReference type="FunFam" id="3.40.50.720:FF:000046">
    <property type="entry name" value="UDP-N-acetylmuramate--L-alanine ligase"/>
    <property type="match status" value="1"/>
</dbReference>
<dbReference type="FunFam" id="3.90.190.20:FF:000001">
    <property type="entry name" value="UDP-N-acetylmuramate--L-alanine ligase"/>
    <property type="match status" value="1"/>
</dbReference>
<dbReference type="Gene3D" id="3.90.190.20">
    <property type="entry name" value="Mur ligase, C-terminal domain"/>
    <property type="match status" value="1"/>
</dbReference>
<dbReference type="Gene3D" id="3.40.1190.10">
    <property type="entry name" value="Mur-like, catalytic domain"/>
    <property type="match status" value="1"/>
</dbReference>
<dbReference type="Gene3D" id="3.40.50.720">
    <property type="entry name" value="NAD(P)-binding Rossmann-like Domain"/>
    <property type="match status" value="1"/>
</dbReference>
<dbReference type="HAMAP" id="MF_00046">
    <property type="entry name" value="MurC"/>
    <property type="match status" value="1"/>
</dbReference>
<dbReference type="InterPro" id="IPR036565">
    <property type="entry name" value="Mur-like_cat_sf"/>
</dbReference>
<dbReference type="InterPro" id="IPR004101">
    <property type="entry name" value="Mur_ligase_C"/>
</dbReference>
<dbReference type="InterPro" id="IPR036615">
    <property type="entry name" value="Mur_ligase_C_dom_sf"/>
</dbReference>
<dbReference type="InterPro" id="IPR013221">
    <property type="entry name" value="Mur_ligase_cen"/>
</dbReference>
<dbReference type="InterPro" id="IPR000713">
    <property type="entry name" value="Mur_ligase_N"/>
</dbReference>
<dbReference type="InterPro" id="IPR050061">
    <property type="entry name" value="MurCDEF_pg_biosynth"/>
</dbReference>
<dbReference type="InterPro" id="IPR005758">
    <property type="entry name" value="UDP-N-AcMur_Ala_ligase_MurC"/>
</dbReference>
<dbReference type="NCBIfam" id="TIGR01082">
    <property type="entry name" value="murC"/>
    <property type="match status" value="1"/>
</dbReference>
<dbReference type="PANTHER" id="PTHR43445:SF3">
    <property type="entry name" value="UDP-N-ACETYLMURAMATE--L-ALANINE LIGASE"/>
    <property type="match status" value="1"/>
</dbReference>
<dbReference type="PANTHER" id="PTHR43445">
    <property type="entry name" value="UDP-N-ACETYLMURAMATE--L-ALANINE LIGASE-RELATED"/>
    <property type="match status" value="1"/>
</dbReference>
<dbReference type="Pfam" id="PF01225">
    <property type="entry name" value="Mur_ligase"/>
    <property type="match status" value="1"/>
</dbReference>
<dbReference type="Pfam" id="PF02875">
    <property type="entry name" value="Mur_ligase_C"/>
    <property type="match status" value="1"/>
</dbReference>
<dbReference type="Pfam" id="PF08245">
    <property type="entry name" value="Mur_ligase_M"/>
    <property type="match status" value="1"/>
</dbReference>
<dbReference type="SUPFAM" id="SSF51984">
    <property type="entry name" value="MurCD N-terminal domain"/>
    <property type="match status" value="1"/>
</dbReference>
<dbReference type="SUPFAM" id="SSF53623">
    <property type="entry name" value="MurD-like peptide ligases, catalytic domain"/>
    <property type="match status" value="1"/>
</dbReference>
<dbReference type="SUPFAM" id="SSF53244">
    <property type="entry name" value="MurD-like peptide ligases, peptide-binding domain"/>
    <property type="match status" value="1"/>
</dbReference>
<sequence>MNTQQLAKLRSIVPEMRRVRHIHFVGIGGAGMGGIAEVLANEGYQISGSDLAPNPVTQQLMNLGATIYFNHRPENVRDASVVVVSSAISADNPEIVAAHEARIPVIRRAEMLAELMRFRHGIAIAGTHGKTTTTAMVSSIYAEAGLDPTFVNGGLVKAAGVHARLGHGRYLIAEADESDASFLHLQPMVAIVTNIEADHMDTYQGDFENLKQTFINFLHNLPFYGRAVMCVDDPVIRELLPRVGRQTTTYGFSEDADVRVEDYQQIGPQGHFTLLRQDKEPMRVTLNAPGRHNALNAAAAVAVATEEGIDDEAILRALESFQGTGRRFDFLGEFPLEPVNGKSGTAMLVDDYGHHPTEVDATIKAARAGWPDKNLVMLFQPHRFTRTRDLYDDFANVLTQVDTLLMLEVYPAGEAPIPGADSRSLCRTIRGRGKIDPILVPDPAQVAEMLAPVLTGNDLILVQGAGNIGKIARSLAEIKLKPQTPEEEQHD</sequence>
<proteinExistence type="inferred from homology"/>
<comment type="function">
    <text evidence="1">Cell wall formation.</text>
</comment>
<comment type="catalytic activity">
    <reaction evidence="1">
        <text>UDP-N-acetyl-alpha-D-muramate + L-alanine + ATP = UDP-N-acetyl-alpha-D-muramoyl-L-alanine + ADP + phosphate + H(+)</text>
        <dbReference type="Rhea" id="RHEA:23372"/>
        <dbReference type="ChEBI" id="CHEBI:15378"/>
        <dbReference type="ChEBI" id="CHEBI:30616"/>
        <dbReference type="ChEBI" id="CHEBI:43474"/>
        <dbReference type="ChEBI" id="CHEBI:57972"/>
        <dbReference type="ChEBI" id="CHEBI:70757"/>
        <dbReference type="ChEBI" id="CHEBI:83898"/>
        <dbReference type="ChEBI" id="CHEBI:456216"/>
        <dbReference type="EC" id="6.3.2.8"/>
    </reaction>
</comment>
<comment type="pathway">
    <text evidence="1">Cell wall biogenesis; peptidoglycan biosynthesis.</text>
</comment>
<comment type="subcellular location">
    <subcellularLocation>
        <location evidence="1">Cytoplasm</location>
    </subcellularLocation>
</comment>
<comment type="similarity">
    <text evidence="1">Belongs to the MurCDEF family.</text>
</comment>